<dbReference type="EMBL" id="M33269">
    <property type="protein sequence ID" value="AAA30740.1"/>
    <property type="molecule type" value="mRNA"/>
</dbReference>
<dbReference type="PIR" id="B36284">
    <property type="entry name" value="B36284"/>
</dbReference>
<dbReference type="SMR" id="P19159"/>
<dbReference type="STRING" id="9913.ENSBTAP00000069266"/>
<dbReference type="GlyCosmos" id="P19159">
    <property type="glycosylation" value="4 sites, No reported glycans"/>
</dbReference>
<dbReference type="GlyGen" id="P19159">
    <property type="glycosylation" value="4 sites"/>
</dbReference>
<dbReference type="PaxDb" id="9913-ENSBTAP00000045276"/>
<dbReference type="eggNOG" id="ENOG502QYU3">
    <property type="taxonomic scope" value="Eukaryota"/>
</dbReference>
<dbReference type="InParanoid" id="P19159"/>
<dbReference type="Proteomes" id="UP000009136">
    <property type="component" value="Unplaced"/>
</dbReference>
<dbReference type="GO" id="GO:0005615">
    <property type="term" value="C:extracellular space"/>
    <property type="evidence" value="ECO:0000318"/>
    <property type="project" value="GO_Central"/>
</dbReference>
<dbReference type="GO" id="GO:0005179">
    <property type="term" value="F:hormone activity"/>
    <property type="evidence" value="ECO:0000318"/>
    <property type="project" value="GO_Central"/>
</dbReference>
<dbReference type="GO" id="GO:0046872">
    <property type="term" value="F:metal ion binding"/>
    <property type="evidence" value="ECO:0007669"/>
    <property type="project" value="UniProtKB-KW"/>
</dbReference>
<dbReference type="GO" id="GO:0005148">
    <property type="term" value="F:prolactin receptor binding"/>
    <property type="evidence" value="ECO:0000318"/>
    <property type="project" value="GO_Central"/>
</dbReference>
<dbReference type="GO" id="GO:0007166">
    <property type="term" value="P:cell surface receptor signaling pathway"/>
    <property type="evidence" value="ECO:0000318"/>
    <property type="project" value="GO_Central"/>
</dbReference>
<dbReference type="GO" id="GO:0007565">
    <property type="term" value="P:female pregnancy"/>
    <property type="evidence" value="ECO:0000318"/>
    <property type="project" value="GO_Central"/>
</dbReference>
<dbReference type="GO" id="GO:0030879">
    <property type="term" value="P:mammary gland development"/>
    <property type="evidence" value="ECO:0000318"/>
    <property type="project" value="GO_Central"/>
</dbReference>
<dbReference type="GO" id="GO:0009891">
    <property type="term" value="P:positive regulation of biosynthetic process"/>
    <property type="evidence" value="ECO:0007669"/>
    <property type="project" value="UniProtKB-ARBA"/>
</dbReference>
<dbReference type="GO" id="GO:1903489">
    <property type="term" value="P:positive regulation of lactation"/>
    <property type="evidence" value="ECO:0000318"/>
    <property type="project" value="GO_Central"/>
</dbReference>
<dbReference type="GO" id="GO:0046427">
    <property type="term" value="P:positive regulation of receptor signaling pathway via JAK-STAT"/>
    <property type="evidence" value="ECO:0000318"/>
    <property type="project" value="GO_Central"/>
</dbReference>
<dbReference type="GO" id="GO:0031667">
    <property type="term" value="P:response to nutrient levels"/>
    <property type="evidence" value="ECO:0000318"/>
    <property type="project" value="GO_Central"/>
</dbReference>
<dbReference type="CDD" id="cd10288">
    <property type="entry name" value="prolactin_like"/>
    <property type="match status" value="1"/>
</dbReference>
<dbReference type="FunFam" id="1.20.1250.10:FF:000039">
    <property type="entry name" value="Placental prolactin-related protein 2"/>
    <property type="match status" value="1"/>
</dbReference>
<dbReference type="Gene3D" id="1.20.1250.10">
    <property type="match status" value="1"/>
</dbReference>
<dbReference type="InterPro" id="IPR009079">
    <property type="entry name" value="4_helix_cytokine-like_core"/>
</dbReference>
<dbReference type="InterPro" id="IPR001400">
    <property type="entry name" value="Somatotropin/Prolactin"/>
</dbReference>
<dbReference type="InterPro" id="IPR018116">
    <property type="entry name" value="Somatotropin_CS"/>
</dbReference>
<dbReference type="PANTHER" id="PTHR11417:SF5">
    <property type="entry name" value="PROLACTIN"/>
    <property type="match status" value="1"/>
</dbReference>
<dbReference type="PANTHER" id="PTHR11417">
    <property type="entry name" value="SOMATOTROPIN,PROLACTIN"/>
    <property type="match status" value="1"/>
</dbReference>
<dbReference type="Pfam" id="PF00103">
    <property type="entry name" value="Hormone_1"/>
    <property type="match status" value="1"/>
</dbReference>
<dbReference type="PRINTS" id="PR00836">
    <property type="entry name" value="SOMATOTROPIN"/>
</dbReference>
<dbReference type="SUPFAM" id="SSF47266">
    <property type="entry name" value="4-helical cytokines"/>
    <property type="match status" value="1"/>
</dbReference>
<dbReference type="PROSITE" id="PS00266">
    <property type="entry name" value="SOMATOTROPIN_1"/>
    <property type="match status" value="1"/>
</dbReference>
<dbReference type="PROSITE" id="PS00338">
    <property type="entry name" value="SOMATOTROPIN_2"/>
    <property type="match status" value="1"/>
</dbReference>
<sequence length="238" mass="27714">MAPAPSFRGHQWTYNPVRGSCLLLLLVVSNLLLCQGISCPSCGPDMFVSLQKSLIDVFINAASLSHDFHNLSTIMFNEFDEKYAQGKLYYINATKSCHTNSFHTPEERDKAQQMNNEDLSKWTLVLLYSWNNPLYYLLLELRNMKNLSEAVISSAMEIENMSEKLQAFIESQFRKIIVPVLKMIHEVSDTWSRFSSMTFSDEDRSISEYYNLFYCLRRDSRKVDMYIKILTCRTRKTC</sequence>
<feature type="signal peptide">
    <location>
        <begin position="1"/>
        <end position="36"/>
    </location>
</feature>
<feature type="chain" id="PRO_0000032957" description="Chorionic somatomammotropin hormone 2">
    <location>
        <begin position="37"/>
        <end position="238"/>
    </location>
</feature>
<feature type="binding site" evidence="1">
    <location>
        <position position="66"/>
    </location>
    <ligand>
        <name>Zn(2+)</name>
        <dbReference type="ChEBI" id="CHEBI:29105"/>
    </ligand>
</feature>
<feature type="binding site" evidence="1">
    <location>
        <position position="224"/>
    </location>
    <ligand>
        <name>Zn(2+)</name>
        <dbReference type="ChEBI" id="CHEBI:29105"/>
    </ligand>
</feature>
<feature type="glycosylation site" description="N-linked (GlcNAc...) asparagine" evidence="2">
    <location>
        <position position="70"/>
    </location>
</feature>
<feature type="glycosylation site" description="N-linked (GlcNAc...) asparagine" evidence="2">
    <location>
        <position position="92"/>
    </location>
</feature>
<feature type="glycosylation site" description="N-linked (GlcNAc...) asparagine" evidence="2">
    <location>
        <position position="146"/>
    </location>
</feature>
<feature type="glycosylation site" description="N-linked (GlcNAc...) asparagine" evidence="2">
    <location>
        <position position="160"/>
    </location>
</feature>
<feature type="disulfide bond" evidence="1">
    <location>
        <begin position="97"/>
        <end position="215"/>
    </location>
</feature>
<feature type="disulfide bond" evidence="1">
    <location>
        <begin position="232"/>
        <end position="238"/>
    </location>
</feature>
<proteinExistence type="evidence at transcript level"/>
<evidence type="ECO:0000250" key="1"/>
<evidence type="ECO:0000255" key="2"/>
<evidence type="ECO:0000305" key="3"/>
<accession>P19159</accession>
<comment type="subcellular location">
    <subcellularLocation>
        <location>Secreted</location>
    </subcellularLocation>
</comment>
<comment type="similarity">
    <text evidence="3">Belongs to the somatotropin/prolactin family.</text>
</comment>
<gene>
    <name type="primary">CSH2</name>
    <name type="synonym">PL2</name>
</gene>
<reference key="1">
    <citation type="journal article" date="1990" name="J. Biol. Chem.">
        <title>Expression of new members of the prolactin growth hormone gene family in bovine placenta. Isolation and characterization of two prolactin-like cDNA clones.</title>
        <authorList>
            <person name="Yamakawa M."/>
            <person name="Tanaka M."/>
            <person name="Koyama M."/>
            <person name="Kagesato Y."/>
            <person name="Watahiki M."/>
            <person name="Yamamoto M."/>
            <person name="Nakashima K."/>
        </authorList>
    </citation>
    <scope>NUCLEOTIDE SEQUENCE [MRNA]</scope>
</reference>
<keyword id="KW-1015">Disulfide bond</keyword>
<keyword id="KW-0325">Glycoprotein</keyword>
<keyword id="KW-0372">Hormone</keyword>
<keyword id="KW-0479">Metal-binding</keyword>
<keyword id="KW-1185">Reference proteome</keyword>
<keyword id="KW-0964">Secreted</keyword>
<keyword id="KW-0732">Signal</keyword>
<keyword id="KW-0862">Zinc</keyword>
<organism>
    <name type="scientific">Bos taurus</name>
    <name type="common">Bovine</name>
    <dbReference type="NCBI Taxonomy" id="9913"/>
    <lineage>
        <taxon>Eukaryota</taxon>
        <taxon>Metazoa</taxon>
        <taxon>Chordata</taxon>
        <taxon>Craniata</taxon>
        <taxon>Vertebrata</taxon>
        <taxon>Euteleostomi</taxon>
        <taxon>Mammalia</taxon>
        <taxon>Eutheria</taxon>
        <taxon>Laurasiatheria</taxon>
        <taxon>Artiodactyla</taxon>
        <taxon>Ruminantia</taxon>
        <taxon>Pecora</taxon>
        <taxon>Bovidae</taxon>
        <taxon>Bovinae</taxon>
        <taxon>Bos</taxon>
    </lineage>
</organism>
<protein>
    <recommendedName>
        <fullName>Chorionic somatomammotropin hormone 2</fullName>
    </recommendedName>
    <alternativeName>
        <fullName>BPLP-II</fullName>
    </alternativeName>
    <alternativeName>
        <fullName>Placental lactogen II</fullName>
    </alternativeName>
</protein>
<name>CSH2_BOVIN</name>